<accession>P0CZ07</accession>
<name>AVLA2_WHEAT</name>
<sequence length="179" mass="19702">MKTMFLLALLAFTATSAVAQLYTTCSQGYGQCQQQPQPQPQPQPQMNTCAAFLQQCIQTPYVQSQMWQASGCQLMRQQCCQPLAQISEQARCQAVCSVSQIIMRQQQGQRFGQPQQQQGQSFGQPQQQVPVEIMRMVLQTLPSMCSVNIPQYCTTTPCSTITPAIYSIPMTATCAGGAC</sequence>
<protein>
    <recommendedName>
        <fullName>Avenin-like a2</fullName>
    </recommendedName>
</protein>
<keyword id="KW-1015">Disulfide bond</keyword>
<keyword id="KW-1185">Reference proteome</keyword>
<keyword id="KW-0708">Seed storage protein</keyword>
<keyword id="KW-0732">Signal</keyword>
<keyword id="KW-0758">Storage protein</keyword>
<evidence type="ECO:0000250" key="1"/>
<evidence type="ECO:0000255" key="2"/>
<evidence type="ECO:0000269" key="3">
    <source ref="1"/>
</evidence>
<evidence type="ECO:0000305" key="4"/>
<proteinExistence type="evidence at transcript level"/>
<organism>
    <name type="scientific">Triticum aestivum</name>
    <name type="common">Wheat</name>
    <dbReference type="NCBI Taxonomy" id="4565"/>
    <lineage>
        <taxon>Eukaryota</taxon>
        <taxon>Viridiplantae</taxon>
        <taxon>Streptophyta</taxon>
        <taxon>Embryophyta</taxon>
        <taxon>Tracheophyta</taxon>
        <taxon>Spermatophyta</taxon>
        <taxon>Magnoliopsida</taxon>
        <taxon>Liliopsida</taxon>
        <taxon>Poales</taxon>
        <taxon>Poaceae</taxon>
        <taxon>BOP clade</taxon>
        <taxon>Pooideae</taxon>
        <taxon>Triticodae</taxon>
        <taxon>Triticeae</taxon>
        <taxon>Triticinae</taxon>
        <taxon>Triticum</taxon>
    </lineage>
</organism>
<comment type="function">
    <text evidence="1">Seed storage protein. Not integrated in the gluten polymer through disulfide bonds, unless incorporated by reduction and reoxidation during dough making. Increases dough strength and bread volume, but decreases dough stability when added into a base wheat flour (By similarity).</text>
</comment>
<comment type="developmental stage">
    <text evidence="3">Expressed in developing grains.</text>
</comment>
<comment type="PTM">
    <text evidence="4">Contains 7 disulfide bonds.</text>
</comment>
<comment type="similarity">
    <text evidence="4">Belongs to the prolamin family.</text>
</comment>
<feature type="signal peptide" evidence="2">
    <location>
        <begin position="1"/>
        <end position="19"/>
    </location>
</feature>
<feature type="chain" id="PRO_0000410693" description="Avenin-like a2">
    <location>
        <begin position="20"/>
        <end position="179"/>
    </location>
</feature>
<reference key="1">
    <citation type="journal article" date="2006" name="J. Cereal Sci.">
        <title>Transcriptome analysis reveals differentially expressed storage protein transcripts in seeds of Aegilops and wheat.</title>
        <authorList>
            <person name="Kan Y."/>
            <person name="Wan Y."/>
            <person name="Beaudoin F."/>
            <person name="Leader D.J."/>
            <person name="Edwards K."/>
            <person name="Poole R."/>
            <person name="Wang D."/>
            <person name="Mitchell R.A.C."/>
            <person name="Shewry P.R."/>
        </authorList>
    </citation>
    <scope>NUCLEOTIDE SEQUENCE [MRNA]</scope>
    <scope>DEVELOPMENTAL STAGE</scope>
    <source>
        <strain>cv. Cadenza</strain>
    </source>
</reference>
<dbReference type="STRING" id="4565.P0CZ07"/>
<dbReference type="Proteomes" id="UP000019116">
    <property type="component" value="Unplaced"/>
</dbReference>
<dbReference type="ExpressionAtlas" id="P0CZ07">
    <property type="expression patterns" value="baseline and differential"/>
</dbReference>
<dbReference type="GO" id="GO:0045735">
    <property type="term" value="F:nutrient reservoir activity"/>
    <property type="evidence" value="ECO:0007669"/>
    <property type="project" value="UniProtKB-KW"/>
</dbReference>
<dbReference type="CDD" id="cd00261">
    <property type="entry name" value="AAI_SS"/>
    <property type="match status" value="1"/>
</dbReference>
<dbReference type="Gene3D" id="1.10.110.10">
    <property type="entry name" value="Plant lipid-transfer and hydrophobic proteins"/>
    <property type="match status" value="1"/>
</dbReference>
<dbReference type="InterPro" id="IPR036312">
    <property type="entry name" value="Bifun_inhib/LTP/seed_sf"/>
</dbReference>
<dbReference type="InterPro" id="IPR016140">
    <property type="entry name" value="Bifunc_inhib/LTP/seed_store"/>
</dbReference>
<dbReference type="InterPro" id="IPR001954">
    <property type="entry name" value="Glia_glutenin"/>
</dbReference>
<dbReference type="PANTHER" id="PTHR33454">
    <property type="entry name" value="PROLAMIN PPROL 14P"/>
    <property type="match status" value="1"/>
</dbReference>
<dbReference type="PANTHER" id="PTHR33454:SF19">
    <property type="entry name" value="PROLAMIN PPROL 14P"/>
    <property type="match status" value="1"/>
</dbReference>
<dbReference type="Pfam" id="PF13016">
    <property type="entry name" value="Gliadin"/>
    <property type="match status" value="1"/>
</dbReference>
<dbReference type="PRINTS" id="PR00208">
    <property type="entry name" value="GLIADGLUTEN"/>
</dbReference>
<dbReference type="SMART" id="SM00499">
    <property type="entry name" value="AAI"/>
    <property type="match status" value="1"/>
</dbReference>
<dbReference type="SUPFAM" id="SSF47699">
    <property type="entry name" value="Bifunctional inhibitor/lipid-transfer protein/seed storage 2S albumin"/>
    <property type="match status" value="1"/>
</dbReference>